<proteinExistence type="evidence at protein level"/>
<dbReference type="EC" id="3.6.4.13" evidence="1"/>
<dbReference type="EMBL" id="Z38117">
    <property type="protein sequence ID" value="CAA86261.1"/>
    <property type="molecule type" value="mRNA"/>
</dbReference>
<dbReference type="EMBL" id="L25126">
    <property type="protein sequence ID" value="AAA53630.1"/>
    <property type="molecule type" value="mRNA"/>
</dbReference>
<dbReference type="CCDS" id="CCDS30027.1"/>
<dbReference type="PIR" id="I84741">
    <property type="entry name" value="I84741"/>
</dbReference>
<dbReference type="RefSeq" id="NP_034158.1">
    <property type="nucleotide sequence ID" value="NM_010028.3"/>
</dbReference>
<dbReference type="SMR" id="Q62167"/>
<dbReference type="BioGRID" id="199084">
    <property type="interactions" value="88"/>
</dbReference>
<dbReference type="CORUM" id="Q62167"/>
<dbReference type="FunCoup" id="Q62167">
    <property type="interactions" value="4107"/>
</dbReference>
<dbReference type="IntAct" id="Q62167">
    <property type="interactions" value="15"/>
</dbReference>
<dbReference type="MINT" id="Q62167"/>
<dbReference type="STRING" id="10090.ENSMUSP00000000804"/>
<dbReference type="ChEMBL" id="CHEMBL3751657"/>
<dbReference type="GlyGen" id="Q62167">
    <property type="glycosylation" value="1 site, 1 O-linked glycan (1 site)"/>
</dbReference>
<dbReference type="iPTMnet" id="Q62167"/>
<dbReference type="MetOSite" id="Q62167"/>
<dbReference type="PhosphoSitePlus" id="Q62167"/>
<dbReference type="SwissPalm" id="Q62167"/>
<dbReference type="REPRODUCTION-2DPAGE" id="Q62167"/>
<dbReference type="jPOST" id="Q62167"/>
<dbReference type="PaxDb" id="10090-ENSMUSP00000000804"/>
<dbReference type="ProteomicsDB" id="279851"/>
<dbReference type="Pumba" id="Q62167"/>
<dbReference type="Antibodypedia" id="463">
    <property type="antibodies" value="703 antibodies from 41 providers"/>
</dbReference>
<dbReference type="DNASU" id="13205"/>
<dbReference type="Ensembl" id="ENSMUST00000000804.7">
    <property type="protein sequence ID" value="ENSMUSP00000000804.7"/>
    <property type="gene ID" value="ENSMUSG00000000787.13"/>
</dbReference>
<dbReference type="GeneID" id="13205"/>
<dbReference type="KEGG" id="mmu:13205"/>
<dbReference type="UCSC" id="uc009srl.2">
    <property type="organism name" value="mouse"/>
</dbReference>
<dbReference type="AGR" id="MGI:103064"/>
<dbReference type="CTD" id="1654"/>
<dbReference type="MGI" id="MGI:103064">
    <property type="gene designation" value="Ddx3x"/>
</dbReference>
<dbReference type="VEuPathDB" id="HostDB:ENSMUSG00000000787"/>
<dbReference type="eggNOG" id="KOG0335">
    <property type="taxonomic scope" value="Eukaryota"/>
</dbReference>
<dbReference type="GeneTree" id="ENSGT00940000154443"/>
<dbReference type="HOGENOM" id="CLU_003041_16_3_1"/>
<dbReference type="InParanoid" id="Q62167"/>
<dbReference type="OMA" id="CYRSWVR"/>
<dbReference type="OrthoDB" id="196131at2759"/>
<dbReference type="PhylomeDB" id="Q62167"/>
<dbReference type="TreeFam" id="TF300332"/>
<dbReference type="BRENDA" id="3.6.4.13">
    <property type="organism ID" value="3474"/>
</dbReference>
<dbReference type="Reactome" id="R-MMU-6798695">
    <property type="pathway name" value="Neutrophil degranulation"/>
</dbReference>
<dbReference type="BioGRID-ORCS" id="13205">
    <property type="hits" value="27 hits in 82 CRISPR screens"/>
</dbReference>
<dbReference type="ChiTaRS" id="Ddx3x">
    <property type="organism name" value="mouse"/>
</dbReference>
<dbReference type="PRO" id="PR:Q62167"/>
<dbReference type="Proteomes" id="UP000000589">
    <property type="component" value="Chromosome X"/>
</dbReference>
<dbReference type="RNAct" id="Q62167">
    <property type="molecule type" value="protein"/>
</dbReference>
<dbReference type="Bgee" id="ENSMUSG00000000787">
    <property type="expression patterns" value="Expressed in maxillary prominence and 282 other cell types or tissues"/>
</dbReference>
<dbReference type="ExpressionAtlas" id="Q62167">
    <property type="expression patterns" value="baseline and differential"/>
</dbReference>
<dbReference type="GO" id="GO:0031252">
    <property type="term" value="C:cell leading edge"/>
    <property type="evidence" value="ECO:0000250"/>
    <property type="project" value="UniProtKB"/>
</dbReference>
<dbReference type="GO" id="GO:0005813">
    <property type="term" value="C:centrosome"/>
    <property type="evidence" value="ECO:0000250"/>
    <property type="project" value="UniProtKB"/>
</dbReference>
<dbReference type="GO" id="GO:0005737">
    <property type="term" value="C:cytoplasm"/>
    <property type="evidence" value="ECO:0000250"/>
    <property type="project" value="UniProtKB"/>
</dbReference>
<dbReference type="GO" id="GO:0010494">
    <property type="term" value="C:cytoplasmic stress granule"/>
    <property type="evidence" value="ECO:0000314"/>
    <property type="project" value="UniProtKB"/>
</dbReference>
<dbReference type="GO" id="GO:0098978">
    <property type="term" value="C:glutamatergic synapse"/>
    <property type="evidence" value="ECO:0007669"/>
    <property type="project" value="Ensembl"/>
</dbReference>
<dbReference type="GO" id="GO:0030027">
    <property type="term" value="C:lamellipodium"/>
    <property type="evidence" value="ECO:0007669"/>
    <property type="project" value="UniProtKB-SubCell"/>
</dbReference>
<dbReference type="GO" id="GO:0072559">
    <property type="term" value="C:NLRP3 inflammasome complex"/>
    <property type="evidence" value="ECO:0000314"/>
    <property type="project" value="UniProtKB"/>
</dbReference>
<dbReference type="GO" id="GO:0005634">
    <property type="term" value="C:nucleus"/>
    <property type="evidence" value="ECO:0000250"/>
    <property type="project" value="UniProtKB"/>
</dbReference>
<dbReference type="GO" id="GO:0005886">
    <property type="term" value="C:plasma membrane"/>
    <property type="evidence" value="ECO:0000250"/>
    <property type="project" value="UniProtKB"/>
</dbReference>
<dbReference type="GO" id="GO:0014069">
    <property type="term" value="C:postsynaptic density"/>
    <property type="evidence" value="ECO:0007669"/>
    <property type="project" value="Ensembl"/>
</dbReference>
<dbReference type="GO" id="GO:0005524">
    <property type="term" value="F:ATP binding"/>
    <property type="evidence" value="ECO:0007669"/>
    <property type="project" value="UniProtKB-KW"/>
</dbReference>
<dbReference type="GO" id="GO:0016887">
    <property type="term" value="F:ATP hydrolysis activity"/>
    <property type="evidence" value="ECO:0000250"/>
    <property type="project" value="UniProtKB"/>
</dbReference>
<dbReference type="GO" id="GO:0003677">
    <property type="term" value="F:DNA binding"/>
    <property type="evidence" value="ECO:0000250"/>
    <property type="project" value="UniProtKB"/>
</dbReference>
<dbReference type="GO" id="GO:0003678">
    <property type="term" value="F:DNA helicase activity"/>
    <property type="evidence" value="ECO:0000250"/>
    <property type="project" value="UniProtKB"/>
</dbReference>
<dbReference type="GO" id="GO:0008190">
    <property type="term" value="F:eukaryotic initiation factor 4E binding"/>
    <property type="evidence" value="ECO:0000250"/>
    <property type="project" value="UniProtKB"/>
</dbReference>
<dbReference type="GO" id="GO:0043015">
    <property type="term" value="F:gamma-tubulin binding"/>
    <property type="evidence" value="ECO:0000250"/>
    <property type="project" value="UniProtKB"/>
</dbReference>
<dbReference type="GO" id="GO:0048027">
    <property type="term" value="F:mRNA 5'-UTR binding"/>
    <property type="evidence" value="ECO:0000250"/>
    <property type="project" value="UniProtKB"/>
</dbReference>
<dbReference type="GO" id="GO:0003729">
    <property type="term" value="F:mRNA binding"/>
    <property type="evidence" value="ECO:0000250"/>
    <property type="project" value="UniProtKB"/>
</dbReference>
<dbReference type="GO" id="GO:0008143">
    <property type="term" value="F:poly(A) binding"/>
    <property type="evidence" value="ECO:0000250"/>
    <property type="project" value="UniProtKB"/>
</dbReference>
<dbReference type="GO" id="GO:0070878">
    <property type="term" value="F:primary miRNA binding"/>
    <property type="evidence" value="ECO:0000314"/>
    <property type="project" value="MGI"/>
</dbReference>
<dbReference type="GO" id="GO:0043539">
    <property type="term" value="F:protein serine/threonine kinase activator activity"/>
    <property type="evidence" value="ECO:0000250"/>
    <property type="project" value="UniProtKB"/>
</dbReference>
<dbReference type="GO" id="GO:0043024">
    <property type="term" value="F:ribosomal small subunit binding"/>
    <property type="evidence" value="ECO:0000250"/>
    <property type="project" value="UniProtKB"/>
</dbReference>
<dbReference type="GO" id="GO:0003723">
    <property type="term" value="F:RNA binding"/>
    <property type="evidence" value="ECO:0000250"/>
    <property type="project" value="UniProtKB"/>
</dbReference>
<dbReference type="GO" id="GO:0003724">
    <property type="term" value="F:RNA helicase activity"/>
    <property type="evidence" value="ECO:0000250"/>
    <property type="project" value="UniProtKB"/>
</dbReference>
<dbReference type="GO" id="GO:0035613">
    <property type="term" value="F:RNA stem-loop binding"/>
    <property type="evidence" value="ECO:0000250"/>
    <property type="project" value="UniProtKB"/>
</dbReference>
<dbReference type="GO" id="GO:0008134">
    <property type="term" value="F:transcription factor binding"/>
    <property type="evidence" value="ECO:0000250"/>
    <property type="project" value="UniProtKB"/>
</dbReference>
<dbReference type="GO" id="GO:0031369">
    <property type="term" value="F:translation initiation factor binding"/>
    <property type="evidence" value="ECO:0000250"/>
    <property type="project" value="UniProtKB"/>
</dbReference>
<dbReference type="GO" id="GO:0071243">
    <property type="term" value="P:cellular response to arsenic-containing substance"/>
    <property type="evidence" value="ECO:0000250"/>
    <property type="project" value="UniProtKB"/>
</dbReference>
<dbReference type="GO" id="GO:0071470">
    <property type="term" value="P:cellular response to osmotic stress"/>
    <property type="evidence" value="ECO:0000250"/>
    <property type="project" value="UniProtKB"/>
</dbReference>
<dbReference type="GO" id="GO:0007059">
    <property type="term" value="P:chromosome segregation"/>
    <property type="evidence" value="ECO:0000250"/>
    <property type="project" value="UniProtKB"/>
</dbReference>
<dbReference type="GO" id="GO:0042256">
    <property type="term" value="P:cytosolic ribosome assembly"/>
    <property type="evidence" value="ECO:0000250"/>
    <property type="project" value="UniProtKB"/>
</dbReference>
<dbReference type="GO" id="GO:0008625">
    <property type="term" value="P:extrinsic apoptotic signaling pathway via death domain receptors"/>
    <property type="evidence" value="ECO:0000250"/>
    <property type="project" value="UniProtKB"/>
</dbReference>
<dbReference type="GO" id="GO:0006954">
    <property type="term" value="P:inflammatory response"/>
    <property type="evidence" value="ECO:0007669"/>
    <property type="project" value="UniProtKB-KW"/>
</dbReference>
<dbReference type="GO" id="GO:0045087">
    <property type="term" value="P:innate immune response"/>
    <property type="evidence" value="ECO:0000250"/>
    <property type="project" value="UniProtKB"/>
</dbReference>
<dbReference type="GO" id="GO:0035556">
    <property type="term" value="P:intracellular signal transduction"/>
    <property type="evidence" value="ECO:0000250"/>
    <property type="project" value="UniProtKB"/>
</dbReference>
<dbReference type="GO" id="GO:0097193">
    <property type="term" value="P:intrinsic apoptotic signaling pathway"/>
    <property type="evidence" value="ECO:0000250"/>
    <property type="project" value="UniProtKB"/>
</dbReference>
<dbReference type="GO" id="GO:0055088">
    <property type="term" value="P:lipid homeostasis"/>
    <property type="evidence" value="ECO:0000250"/>
    <property type="project" value="UniProtKB"/>
</dbReference>
<dbReference type="GO" id="GO:0043066">
    <property type="term" value="P:negative regulation of apoptotic process"/>
    <property type="evidence" value="ECO:0000250"/>
    <property type="project" value="UniProtKB"/>
</dbReference>
<dbReference type="GO" id="GO:1902042">
    <property type="term" value="P:negative regulation of extrinsic apoptotic signaling pathway via death domain receptors"/>
    <property type="evidence" value="ECO:0000250"/>
    <property type="project" value="UniProtKB"/>
</dbReference>
<dbReference type="GO" id="GO:2001243">
    <property type="term" value="P:negative regulation of intrinsic apoptotic signaling pathway"/>
    <property type="evidence" value="ECO:0000250"/>
    <property type="project" value="UniProtKB"/>
</dbReference>
<dbReference type="GO" id="GO:1901223">
    <property type="term" value="P:negative regulation of non-canonical NF-kappaB signal transduction"/>
    <property type="evidence" value="ECO:0000250"/>
    <property type="project" value="UniProtKB"/>
</dbReference>
<dbReference type="GO" id="GO:0031333">
    <property type="term" value="P:negative regulation of protein-containing complex assembly"/>
    <property type="evidence" value="ECO:0000250"/>
    <property type="project" value="UniProtKB"/>
</dbReference>
<dbReference type="GO" id="GO:0017148">
    <property type="term" value="P:negative regulation of translation"/>
    <property type="evidence" value="ECO:0000250"/>
    <property type="project" value="UniProtKB"/>
</dbReference>
<dbReference type="GO" id="GO:0043065">
    <property type="term" value="P:positive regulation of apoptotic process"/>
    <property type="evidence" value="ECO:0000250"/>
    <property type="project" value="UniProtKB"/>
</dbReference>
<dbReference type="GO" id="GO:0090263">
    <property type="term" value="P:positive regulation of canonical Wnt signaling pathway"/>
    <property type="evidence" value="ECO:0000250"/>
    <property type="project" value="UniProtKB"/>
</dbReference>
<dbReference type="GO" id="GO:0030307">
    <property type="term" value="P:positive regulation of cell growth"/>
    <property type="evidence" value="ECO:0000250"/>
    <property type="project" value="UniProtKB"/>
</dbReference>
<dbReference type="GO" id="GO:1900087">
    <property type="term" value="P:positive regulation of G1/S transition of mitotic cell cycle"/>
    <property type="evidence" value="ECO:0000250"/>
    <property type="project" value="UniProtKB"/>
</dbReference>
<dbReference type="GO" id="GO:0032727">
    <property type="term" value="P:positive regulation of interferon-alpha production"/>
    <property type="evidence" value="ECO:0000250"/>
    <property type="project" value="UniProtKB"/>
</dbReference>
<dbReference type="GO" id="GO:0032728">
    <property type="term" value="P:positive regulation of interferon-beta production"/>
    <property type="evidence" value="ECO:0000250"/>
    <property type="project" value="UniProtKB"/>
</dbReference>
<dbReference type="GO" id="GO:1900227">
    <property type="term" value="P:positive regulation of NLRP3 inflammasome complex assembly"/>
    <property type="evidence" value="ECO:0000314"/>
    <property type="project" value="UniProtKB"/>
</dbReference>
<dbReference type="GO" id="GO:1901224">
    <property type="term" value="P:positive regulation of non-canonical NF-kappaB signal transduction"/>
    <property type="evidence" value="ECO:0000250"/>
    <property type="project" value="UniProtKB"/>
</dbReference>
<dbReference type="GO" id="GO:1902523">
    <property type="term" value="P:positive regulation of protein K63-linked ubiquitination"/>
    <property type="evidence" value="ECO:0000250"/>
    <property type="project" value="UniProtKB"/>
</dbReference>
<dbReference type="GO" id="GO:0034157">
    <property type="term" value="P:positive regulation of toll-like receptor 7 signaling pathway"/>
    <property type="evidence" value="ECO:0000250"/>
    <property type="project" value="UniProtKB"/>
</dbReference>
<dbReference type="GO" id="GO:0034161">
    <property type="term" value="P:positive regulation of toll-like receptor 8 signaling pathway"/>
    <property type="evidence" value="ECO:0000250"/>
    <property type="project" value="UniProtKB"/>
</dbReference>
<dbReference type="GO" id="GO:0045944">
    <property type="term" value="P:positive regulation of transcription by RNA polymerase II"/>
    <property type="evidence" value="ECO:0000250"/>
    <property type="project" value="UniProtKB"/>
</dbReference>
<dbReference type="GO" id="GO:0045727">
    <property type="term" value="P:positive regulation of translation"/>
    <property type="evidence" value="ECO:0000250"/>
    <property type="project" value="UniProtKB"/>
</dbReference>
<dbReference type="GO" id="GO:0036493">
    <property type="term" value="P:positive regulation of translation in response to endoplasmic reticulum stress"/>
    <property type="evidence" value="ECO:0000250"/>
    <property type="project" value="UniProtKB"/>
</dbReference>
<dbReference type="GO" id="GO:0045948">
    <property type="term" value="P:positive regulation of translational initiation"/>
    <property type="evidence" value="ECO:0000250"/>
    <property type="project" value="UniProtKB"/>
</dbReference>
<dbReference type="GO" id="GO:0031053">
    <property type="term" value="P:primary miRNA processing"/>
    <property type="evidence" value="ECO:0000314"/>
    <property type="project" value="MGI"/>
</dbReference>
<dbReference type="GO" id="GO:0009615">
    <property type="term" value="P:response to virus"/>
    <property type="evidence" value="ECO:0000250"/>
    <property type="project" value="UniProtKB"/>
</dbReference>
<dbReference type="GO" id="GO:0034063">
    <property type="term" value="P:stress granule assembly"/>
    <property type="evidence" value="ECO:0000315"/>
    <property type="project" value="UniProtKB"/>
</dbReference>
<dbReference type="CDD" id="cd18051">
    <property type="entry name" value="DEADc_DDX3"/>
    <property type="match status" value="1"/>
</dbReference>
<dbReference type="CDD" id="cd18787">
    <property type="entry name" value="SF2_C_DEAD"/>
    <property type="match status" value="1"/>
</dbReference>
<dbReference type="FunFam" id="3.40.50.300:FF:000160">
    <property type="entry name" value="ATP-dependent RNA helicase DDX3X"/>
    <property type="match status" value="1"/>
</dbReference>
<dbReference type="FunFam" id="3.40.50.300:FF:000008">
    <property type="entry name" value="ATP-dependent RNA helicase RhlB"/>
    <property type="match status" value="1"/>
</dbReference>
<dbReference type="Gene3D" id="3.40.50.300">
    <property type="entry name" value="P-loop containing nucleotide triphosphate hydrolases"/>
    <property type="match status" value="2"/>
</dbReference>
<dbReference type="InterPro" id="IPR011545">
    <property type="entry name" value="DEAD/DEAH_box_helicase_dom"/>
</dbReference>
<dbReference type="InterPro" id="IPR014001">
    <property type="entry name" value="Helicase_ATP-bd"/>
</dbReference>
<dbReference type="InterPro" id="IPR001650">
    <property type="entry name" value="Helicase_C-like"/>
</dbReference>
<dbReference type="InterPro" id="IPR027417">
    <property type="entry name" value="P-loop_NTPase"/>
</dbReference>
<dbReference type="InterPro" id="IPR000629">
    <property type="entry name" value="RNA-helicase_DEAD-box_CS"/>
</dbReference>
<dbReference type="InterPro" id="IPR014014">
    <property type="entry name" value="RNA_helicase_DEAD_Q_motif"/>
</dbReference>
<dbReference type="PANTHER" id="PTHR47958">
    <property type="entry name" value="ATP-DEPENDENT RNA HELICASE DBP3"/>
    <property type="match status" value="1"/>
</dbReference>
<dbReference type="Pfam" id="PF00270">
    <property type="entry name" value="DEAD"/>
    <property type="match status" value="1"/>
</dbReference>
<dbReference type="Pfam" id="PF00271">
    <property type="entry name" value="Helicase_C"/>
    <property type="match status" value="1"/>
</dbReference>
<dbReference type="SMART" id="SM00487">
    <property type="entry name" value="DEXDc"/>
    <property type="match status" value="1"/>
</dbReference>
<dbReference type="SMART" id="SM00490">
    <property type="entry name" value="HELICc"/>
    <property type="match status" value="1"/>
</dbReference>
<dbReference type="SUPFAM" id="SSF52540">
    <property type="entry name" value="P-loop containing nucleoside triphosphate hydrolases"/>
    <property type="match status" value="1"/>
</dbReference>
<dbReference type="PROSITE" id="PS00039">
    <property type="entry name" value="DEAD_ATP_HELICASE"/>
    <property type="match status" value="1"/>
</dbReference>
<dbReference type="PROSITE" id="PS51192">
    <property type="entry name" value="HELICASE_ATP_BIND_1"/>
    <property type="match status" value="1"/>
</dbReference>
<dbReference type="PROSITE" id="PS51194">
    <property type="entry name" value="HELICASE_CTER"/>
    <property type="match status" value="1"/>
</dbReference>
<dbReference type="PROSITE" id="PS51195">
    <property type="entry name" value="Q_MOTIF"/>
    <property type="match status" value="1"/>
</dbReference>
<organism>
    <name type="scientific">Mus musculus</name>
    <name type="common">Mouse</name>
    <dbReference type="NCBI Taxonomy" id="10090"/>
    <lineage>
        <taxon>Eukaryota</taxon>
        <taxon>Metazoa</taxon>
        <taxon>Chordata</taxon>
        <taxon>Craniata</taxon>
        <taxon>Vertebrata</taxon>
        <taxon>Euteleostomi</taxon>
        <taxon>Mammalia</taxon>
        <taxon>Eutheria</taxon>
        <taxon>Euarchontoglires</taxon>
        <taxon>Glires</taxon>
        <taxon>Rodentia</taxon>
        <taxon>Myomorpha</taxon>
        <taxon>Muroidea</taxon>
        <taxon>Muridae</taxon>
        <taxon>Murinae</taxon>
        <taxon>Mus</taxon>
        <taxon>Mus</taxon>
    </lineage>
</organism>
<name>DDX3X_MOUSE</name>
<evidence type="ECO:0000250" key="1">
    <source>
        <dbReference type="UniProtKB" id="O00571"/>
    </source>
</evidence>
<evidence type="ECO:0000250" key="2">
    <source>
        <dbReference type="UniProtKB" id="Q62095"/>
    </source>
</evidence>
<evidence type="ECO:0000255" key="3">
    <source>
        <dbReference type="PROSITE-ProRule" id="PRU00541"/>
    </source>
</evidence>
<evidence type="ECO:0000255" key="4">
    <source>
        <dbReference type="PROSITE-ProRule" id="PRU00542"/>
    </source>
</evidence>
<evidence type="ECO:0000256" key="5">
    <source>
        <dbReference type="SAM" id="MobiDB-lite"/>
    </source>
</evidence>
<evidence type="ECO:0000269" key="6">
    <source>
    </source>
</evidence>
<evidence type="ECO:0000269" key="7">
    <source>
    </source>
</evidence>
<evidence type="ECO:0000269" key="8">
    <source>
    </source>
</evidence>
<evidence type="ECO:0000269" key="9">
    <source>
    </source>
</evidence>
<evidence type="ECO:0000269" key="10">
    <source>
    </source>
</evidence>
<evidence type="ECO:0000269" key="11">
    <source>
    </source>
</evidence>
<evidence type="ECO:0000269" key="12">
    <source>
    </source>
</evidence>
<evidence type="ECO:0000303" key="13">
    <source>
    </source>
</evidence>
<evidence type="ECO:0000303" key="14">
    <source>
    </source>
</evidence>
<evidence type="ECO:0000305" key="15"/>
<evidence type="ECO:0007744" key="16">
    <source>
    </source>
</evidence>
<evidence type="ECO:0007744" key="17">
    <source>
    </source>
</evidence>
<evidence type="ECO:0007744" key="18">
    <source>
    </source>
</evidence>
<evidence type="ECO:0007744" key="19">
    <source>
    </source>
</evidence>
<keyword id="KW-0007">Acetylation</keyword>
<keyword id="KW-0053">Apoptosis</keyword>
<keyword id="KW-0067">ATP-binding</keyword>
<keyword id="KW-1003">Cell membrane</keyword>
<keyword id="KW-0966">Cell projection</keyword>
<keyword id="KW-0159">Chromosome partition</keyword>
<keyword id="KW-0963">Cytoplasm</keyword>
<keyword id="KW-0903">Direct protein sequencing</keyword>
<keyword id="KW-0238">DNA-binding</keyword>
<keyword id="KW-0347">Helicase</keyword>
<keyword id="KW-0378">Hydrolase</keyword>
<keyword id="KW-0391">Immunity</keyword>
<keyword id="KW-1271">Inflammasome</keyword>
<keyword id="KW-0395">Inflammatory response</keyword>
<keyword id="KW-0399">Innate immunity</keyword>
<keyword id="KW-1017">Isopeptide bond</keyword>
<keyword id="KW-0472">Membrane</keyword>
<keyword id="KW-0488">Methylation</keyword>
<keyword id="KW-0547">Nucleotide-binding</keyword>
<keyword id="KW-0539">Nucleus</keyword>
<keyword id="KW-0597">Phosphoprotein</keyword>
<keyword id="KW-1185">Reference proteome</keyword>
<keyword id="KW-0690">Ribosome biogenesis</keyword>
<keyword id="KW-0694">RNA-binding</keyword>
<keyword id="KW-0804">Transcription</keyword>
<keyword id="KW-0805">Transcription regulation</keyword>
<keyword id="KW-0810">Translation regulation</keyword>
<keyword id="KW-0832">Ubl conjugation</keyword>
<feature type="initiator methionine" description="Removed" evidence="6">
    <location>
        <position position="1"/>
    </location>
</feature>
<feature type="chain" id="PRO_0000055010" description="ATP-dependent RNA helicase DDX3X">
    <location>
        <begin position="2"/>
        <end position="662"/>
    </location>
</feature>
<feature type="domain" description="Helicase ATP-binding" evidence="3">
    <location>
        <begin position="211"/>
        <end position="403"/>
    </location>
</feature>
<feature type="domain" description="Helicase C-terminal" evidence="4">
    <location>
        <begin position="414"/>
        <end position="575"/>
    </location>
</feature>
<feature type="region of interest" description="Required for TBK1 and IKBKE-dependent IFNB1 activation" evidence="1">
    <location>
        <begin position="2"/>
        <end position="139"/>
    </location>
</feature>
<feature type="region of interest" description="Disordered" evidence="5">
    <location>
        <begin position="19"/>
        <end position="144"/>
    </location>
</feature>
<feature type="region of interest" description="Interaction with EIF4E" evidence="1">
    <location>
        <begin position="38"/>
        <end position="44"/>
    </location>
</feature>
<feature type="region of interest" description="Interaction with GSK3B" evidence="1">
    <location>
        <begin position="100"/>
        <end position="662"/>
    </location>
</feature>
<feature type="region of interest" description="Interaction with IKBKE" evidence="1">
    <location>
        <begin position="100"/>
        <end position="110"/>
    </location>
</feature>
<feature type="region of interest" description="Interaction with CHUK" evidence="1">
    <location>
        <begin position="139"/>
        <end position="172"/>
    </location>
</feature>
<feature type="region of interest" description="Involved in stimulation of ATPase activity by DNA and RNA, nucleic acid binding and unwinding" evidence="1">
    <location>
        <begin position="250"/>
        <end position="259"/>
    </location>
</feature>
<feature type="region of interest" description="Interaction with NXF1" evidence="1">
    <location>
        <begin position="536"/>
        <end position="661"/>
    </location>
</feature>
<feature type="region of interest" description="Disordered" evidence="5">
    <location>
        <begin position="601"/>
        <end position="633"/>
    </location>
</feature>
<feature type="short sequence motif" description="Nuclear export signal" evidence="1">
    <location>
        <begin position="12"/>
        <end position="21"/>
    </location>
</feature>
<feature type="short sequence motif" description="Q motif">
    <location>
        <begin position="180"/>
        <end position="208"/>
    </location>
</feature>
<feature type="short sequence motif" description="DEAD box">
    <location>
        <begin position="347"/>
        <end position="350"/>
    </location>
</feature>
<feature type="compositionally biased region" description="Polar residues" evidence="5">
    <location>
        <begin position="21"/>
        <end position="34"/>
    </location>
</feature>
<feature type="compositionally biased region" description="Basic and acidic residues" evidence="5">
    <location>
        <begin position="44"/>
        <end position="68"/>
    </location>
</feature>
<feature type="compositionally biased region" description="Basic and acidic residues" evidence="5">
    <location>
        <begin position="94"/>
        <end position="130"/>
    </location>
</feature>
<feature type="compositionally biased region" description="Low complexity" evidence="5">
    <location>
        <begin position="604"/>
        <end position="622"/>
    </location>
</feature>
<feature type="compositionally biased region" description="Gly residues" evidence="5">
    <location>
        <begin position="623"/>
        <end position="633"/>
    </location>
</feature>
<feature type="binding site" evidence="3">
    <location>
        <begin position="200"/>
        <end position="207"/>
    </location>
    <ligand>
        <name>ATP</name>
        <dbReference type="ChEBI" id="CHEBI:30616"/>
    </ligand>
</feature>
<feature type="binding site" evidence="3">
    <location>
        <begin position="224"/>
        <end position="231"/>
    </location>
    <ligand>
        <name>ATP</name>
        <dbReference type="ChEBI" id="CHEBI:30616"/>
    </ligand>
</feature>
<feature type="modified residue" description="N-acetylserine" evidence="6">
    <location>
        <position position="2"/>
    </location>
</feature>
<feature type="modified residue" description="N6-acetyllysine" evidence="18">
    <location>
        <position position="55"/>
    </location>
</feature>
<feature type="modified residue" description="Phosphoserine" evidence="1">
    <location>
        <position position="82"/>
    </location>
</feature>
<feature type="modified residue" description="Phosphoserine" evidence="1">
    <location>
        <position position="90"/>
    </location>
</feature>
<feature type="modified residue" description="Omega-N-methylarginine" evidence="19">
    <location>
        <position position="101"/>
    </location>
</feature>
<feature type="modified residue" description="Phosphotyrosine" evidence="16">
    <location>
        <position position="104"/>
    </location>
</feature>
<feature type="modified residue" description="Omega-N-methylarginine" evidence="19">
    <location>
        <position position="110"/>
    </location>
</feature>
<feature type="modified residue" description="N6-acetyllysine" evidence="1">
    <location>
        <position position="118"/>
    </location>
</feature>
<feature type="modified residue" description="Phosphoserine" evidence="17">
    <location>
        <position position="131"/>
    </location>
</feature>
<feature type="modified residue" description="Phosphoserine" evidence="1">
    <location>
        <position position="183"/>
    </location>
</feature>
<feature type="modified residue" description="Phosphoserine" evidence="2">
    <location>
        <position position="456"/>
    </location>
</feature>
<feature type="modified residue" description="Omega-N-methylarginine" evidence="1">
    <location>
        <position position="592"/>
    </location>
</feature>
<feature type="modified residue" description="Phosphoserine" evidence="1">
    <location>
        <position position="594"/>
    </location>
</feature>
<feature type="modified residue" description="Phosphoserine" evidence="1">
    <location>
        <position position="605"/>
    </location>
</feature>
<feature type="modified residue" description="Phosphoserine" evidence="1">
    <location>
        <position position="612"/>
    </location>
</feature>
<feature type="modified residue" description="Omega-N-methylarginine" evidence="1">
    <location>
        <position position="617"/>
    </location>
</feature>
<feature type="modified residue" description="Omega-N-methylarginine" evidence="19">
    <location>
        <position position="632"/>
    </location>
</feature>
<feature type="cross-link" description="Glycyl lysine isopeptide (Lys-Gly) (interchain with G-Cter in SUMO2)" evidence="1">
    <location>
        <position position="215"/>
    </location>
</feature>
<accession>Q62167</accession>
<accession>O09060</accession>
<accession>O09143</accession>
<protein>
    <recommendedName>
        <fullName>ATP-dependent RNA helicase DDX3X</fullName>
        <ecNumber evidence="1">3.6.4.13</ecNumber>
    </recommendedName>
    <alternativeName>
        <fullName>D1Pas1-related sequence 2</fullName>
    </alternativeName>
    <alternativeName>
        <fullName>DEAD box RNA helicase DEAD3</fullName>
        <shortName evidence="13">mDEAD3</shortName>
    </alternativeName>
    <alternativeName>
        <fullName>DEAD box protein 3, X-chromosomal</fullName>
    </alternativeName>
    <alternativeName>
        <fullName evidence="14">Embryonic RNA helicase</fullName>
    </alternativeName>
</protein>
<sequence>MSHVAVENALGLDQQFAGLDLNSSDNQSGGSTASKGRYIPPHLRNREATKGFYDKDSSGWSSSKDKDAYSSFGSRGDSRGKSSFFGDRGSGSRGRFDDRGRGDYDGIGGRGDRSGFGKFERGGNSRWCDKSDEDDWSKPLPPSERLEQELFSGGNTGINFEKYDDIPVEATGNNCPPHIESFSDVEMGEIIMGNIELTRYTRPTPVQKHAIPIIKEKRDLMACAQTGSGKTAAFLLPILSQIYADGPGEALRAMKENGRYGRRKQYPISLVLAPTRELAVQIYEEARKFSYRSRVRPCVVYGGAEIGQQIRDLERGCHLLVATPGRLVDMMERGKIGLDFCKYLVLDEADRMLDMGFEPQIRRIVEQDTMPPKGVRHTMMFSATFPKEIQMLARDFLDEYIFLAVGRVGSTSENITQKVVWVEEIDKRSFLLDLLNATGKDSLTLVFVETKKGADSLEDFLYHEGYACTSIHGDRSQRDREEALHQFRSGKSPILVATAVAARGLDISNVKHVINFDLPSDIEEYVHRIGRTGRVGNLGLATSFFNERNINITKDLLDLLVEAKQEVPSWLENMAFEHHYKGSSRGRSKSSRFSGGFGARDYRQSSGASSSSFSSSRASSSRSGGGGHGGSRGFGGGGYGGFYNSDGYGGNYNSQGVDWWGN</sequence>
<reference key="1">
    <citation type="journal article" date="1995" name="Biochem. J.">
        <title>The embryonic RNA helicase gene (ERH): a new member of the DEAD box family of RNA helicases.</title>
        <authorList>
            <person name="Sowden J.C."/>
            <person name="Putt W."/>
            <person name="Morrison K."/>
            <person name="Beddington R."/>
            <person name="Edwards Y."/>
        </authorList>
    </citation>
    <scope>NUCLEOTIDE SEQUENCE [MRNA]</scope>
    <scope>TISSUE SPECIFICITY</scope>
    <scope>DEVELOPMENTAL STAGE</scope>
    <source>
        <strain>C57BL/6J</strain>
        <tissue>Notochord</tissue>
    </source>
</reference>
<reference key="2">
    <citation type="journal article" date="1994" name="Gene">
        <title>Mouse erythroid cells express multiple putative RNA helicase genes exhibiting high sequence conservation from yeast to mammals.</title>
        <authorList>
            <person name="Gee S.L."/>
            <person name="Conboy J.G."/>
        </authorList>
    </citation>
    <scope>NUCLEOTIDE SEQUENCE [MRNA]</scope>
    <source>
        <tissue>Erythroleukemia</tissue>
    </source>
</reference>
<reference key="3">
    <citation type="journal article" date="2000" name="J. Exp. Med.">
        <title>An N-acetylated natural ligand of human histocompatibility leukocyte antigen (HLA)-B39. Classical major histocompatibility complex class I proteins bind peptides with a blocked NH(2) terminus in vivo.</title>
        <authorList>
            <person name="Yaguee J."/>
            <person name="Alvarez I."/>
            <person name="Rognan D."/>
            <person name="Ramos M."/>
            <person name="Vazquez J."/>
            <person name="Lopez de Castro J.A."/>
        </authorList>
    </citation>
    <scope>PROTEIN SEQUENCE OF 2-10</scope>
    <scope>ACETYLATION AT SER-2</scope>
</reference>
<reference key="4">
    <citation type="submission" date="2007-03" db="UniProtKB">
        <authorList>
            <person name="Lubec G."/>
            <person name="Klug S."/>
        </authorList>
    </citation>
    <scope>PROTEIN SEQUENCE OF 535-548</scope>
    <scope>IDENTIFICATION BY MASS SPECTROMETRY</scope>
    <source>
        <tissue>Hippocampus</tissue>
    </source>
</reference>
<reference key="5">
    <citation type="journal article" date="2005" name="Nat. Biotechnol.">
        <title>Immunoaffinity profiling of tyrosine phosphorylation in cancer cells.</title>
        <authorList>
            <person name="Rush J."/>
            <person name="Moritz A."/>
            <person name="Lee K.A."/>
            <person name="Guo A."/>
            <person name="Goss V.L."/>
            <person name="Spek E.J."/>
            <person name="Zhang H."/>
            <person name="Zha X.-M."/>
            <person name="Polakiewicz R.D."/>
            <person name="Comb M.J."/>
        </authorList>
    </citation>
    <scope>PHOSPHORYLATION [LARGE SCALE ANALYSIS] AT TYR-104</scope>
    <scope>IDENTIFICATION BY MASS SPECTROMETRY [LARGE SCALE ANALYSIS]</scope>
</reference>
<reference key="6">
    <citation type="journal article" date="2007" name="Proc. Natl. Acad. Sci. U.S.A.">
        <title>Large-scale phosphorylation analysis of mouse liver.</title>
        <authorList>
            <person name="Villen J."/>
            <person name="Beausoleil S.A."/>
            <person name="Gerber S.A."/>
            <person name="Gygi S.P."/>
        </authorList>
    </citation>
    <scope>PHOSPHORYLATION [LARGE SCALE ANALYSIS] AT SER-131</scope>
    <scope>IDENTIFICATION BY MASS SPECTROMETRY [LARGE SCALE ANALYSIS]</scope>
    <source>
        <tissue>Liver</tissue>
    </source>
</reference>
<reference key="7">
    <citation type="journal article" date="2010" name="Cell">
        <title>A tissue-specific atlas of mouse protein phosphorylation and expression.</title>
        <authorList>
            <person name="Huttlin E.L."/>
            <person name="Jedrychowski M.P."/>
            <person name="Elias J.E."/>
            <person name="Goswami T."/>
            <person name="Rad R."/>
            <person name="Beausoleil S.A."/>
            <person name="Villen J."/>
            <person name="Haas W."/>
            <person name="Sowa M.E."/>
            <person name="Gygi S.P."/>
        </authorList>
    </citation>
    <scope>IDENTIFICATION BY MASS SPECTROMETRY [LARGE SCALE ANALYSIS]</scope>
    <source>
        <tissue>Heart</tissue>
        <tissue>Kidney</tissue>
        <tissue>Liver</tissue>
        <tissue>Lung</tissue>
        <tissue>Pancreas</tissue>
        <tissue>Spleen</tissue>
    </source>
</reference>
<reference key="8">
    <citation type="journal article" date="2013" name="Mol. Cell">
        <title>SIRT5-mediated lysine desuccinylation impacts diverse metabolic pathways.</title>
        <authorList>
            <person name="Park J."/>
            <person name="Chen Y."/>
            <person name="Tishkoff D.X."/>
            <person name="Peng C."/>
            <person name="Tan M."/>
            <person name="Dai L."/>
            <person name="Xie Z."/>
            <person name="Zhang Y."/>
            <person name="Zwaans B.M."/>
            <person name="Skinner M.E."/>
            <person name="Lombard D.B."/>
            <person name="Zhao Y."/>
        </authorList>
    </citation>
    <scope>ACETYLATION [LARGE SCALE ANALYSIS] AT LYS-55</scope>
    <scope>IDENTIFICATION BY MASS SPECTROMETRY [LARGE SCALE ANALYSIS]</scope>
    <source>
        <tissue>Embryonic fibroblast</tissue>
    </source>
</reference>
<reference key="9">
    <citation type="journal article" date="2014" name="J. Biomed. Res.">
        <title>DDX3X regulates cell survival and cell cycle during mouse early embryonic development.</title>
        <authorList>
            <person name="Li Q."/>
            <person name="Zhang P."/>
            <person name="Zhang C."/>
            <person name="Wang Y."/>
            <person name="Wan R."/>
            <person name="Yang Y."/>
            <person name="Guo X."/>
            <person name="Huo R."/>
            <person name="Lin M."/>
            <person name="Zhou Z."/>
            <person name="Sha J."/>
        </authorList>
    </citation>
    <scope>SUBCELLULAR LOCATION</scope>
    <scope>TISSUE SPECIFICITY</scope>
    <scope>DEVELOPMENTAL STAGE</scope>
</reference>
<reference key="10">
    <citation type="journal article" date="2014" name="Mol. Cell. Proteomics">
        <title>Immunoaffinity enrichment and mass spectrometry analysis of protein methylation.</title>
        <authorList>
            <person name="Guo A."/>
            <person name="Gu H."/>
            <person name="Zhou J."/>
            <person name="Mulhern D."/>
            <person name="Wang Y."/>
            <person name="Lee K.A."/>
            <person name="Yang V."/>
            <person name="Aguiar M."/>
            <person name="Kornhauser J."/>
            <person name="Jia X."/>
            <person name="Ren J."/>
            <person name="Beausoleil S.A."/>
            <person name="Silva J.C."/>
            <person name="Vemulapalli V."/>
            <person name="Bedford M.T."/>
            <person name="Comb M.J."/>
        </authorList>
    </citation>
    <scope>METHYLATION [LARGE SCALE ANALYSIS] AT ARG-101; ARG-110 AND ARG-632</scope>
    <scope>IDENTIFICATION BY MASS SPECTROMETRY [LARGE SCALE ANALYSIS]</scope>
    <source>
        <tissue>Brain</tissue>
        <tissue>Embryo</tissue>
    </source>
</reference>
<reference key="11">
    <citation type="journal article" date="2016" name="Hum. Mol. Genet.">
        <title>Targeted inactivation of murine Ddx3x: essential roles of Ddx3x in placentation and embryogenesis.</title>
        <authorList>
            <person name="Chen C.Y."/>
            <person name="Chan C.H."/>
            <person name="Chen C.M."/>
            <person name="Tsai Y.S."/>
            <person name="Tsai T.Y."/>
            <person name="Wu Lee Y.H."/>
            <person name="You L.R."/>
        </authorList>
    </citation>
    <scope>DISRUPTION PHENOTYPE</scope>
    <scope>DEVELOPMENTAL STAGE</scope>
    <scope>CHROMOSOMAL INACTIVATION</scope>
</reference>
<reference key="12">
    <citation type="journal article" date="2019" name="Nature">
        <title>DDX3X acts as a live-or-die checkpoint in stressed cells by regulating NLRP3 inflammasome.</title>
        <authorList>
            <person name="Samir P."/>
            <person name="Kesavardhana S."/>
            <person name="Patmore D.M."/>
            <person name="Gingras S."/>
            <person name="Malireddi R.K.S."/>
            <person name="Karki R."/>
            <person name="Guy C.S."/>
            <person name="Briard B."/>
            <person name="Place D.E."/>
            <person name="Bhattacharya A."/>
            <person name="Sharma B.R."/>
            <person name="Nourse A."/>
            <person name="King S.V."/>
            <person name="Pitre A."/>
            <person name="Burton A.R."/>
            <person name="Pelletier S."/>
            <person name="Gilbertson R.J."/>
            <person name="Kanneganti T.D."/>
        </authorList>
    </citation>
    <scope>FUNCTION</scope>
    <scope>INTERACTION WITH NLRP3</scope>
    <scope>SUBCELLULAR LOCATION</scope>
</reference>
<reference key="13">
    <citation type="journal article" date="2018" name="PLoS Pathog.">
        <title>The RNA helicase DDX3X is an essential mediator of innate antimicrobial immunity.</title>
        <authorList>
            <person name="Szappanos D."/>
            <person name="Tschismarov R."/>
            <person name="Perlot T."/>
            <person name="Westermayer S."/>
            <person name="Fischer K."/>
            <person name="Platanitis E."/>
            <person name="Kallinger F."/>
            <person name="Novatchkova M."/>
            <person name="Lassnig C."/>
            <person name="Mueller M."/>
            <person name="Sexl V."/>
            <person name="Bennett K.L."/>
            <person name="Foong-Sobis M."/>
            <person name="Penninger J.M."/>
            <person name="Decker T."/>
        </authorList>
    </citation>
    <scope>FUNCTION</scope>
    <scope>DISRUPTION PHENOTYPE</scope>
</reference>
<reference key="14">
    <citation type="journal article" date="2019" name="J. Reprod. Dev.">
        <title>An azoospermic factor gene, Ddx3y and its paralog, Ddx3x are dispensable in germ cells for male fertility.</title>
        <authorList>
            <person name="Matsumura T."/>
            <person name="Endo T."/>
            <person name="Isotani A."/>
            <person name="Ogawa M."/>
            <person name="Ikawa M."/>
        </authorList>
    </citation>
    <scope>DISRUPTION PHENOTYPE</scope>
</reference>
<gene>
    <name type="primary">Ddx3x</name>
    <name type="synonym">D1Pas1-rs2</name>
    <name type="synonym">Ddx3</name>
    <name type="synonym">Dead3</name>
    <name evidence="14" type="synonym">Erh</name>
</gene>
<comment type="function">
    <text evidence="1 9 11">Multifunctional ATP-dependent RNA helicase. The ATPase activity can be stimulated by various ribo-and deoxynucleic acids indicative for a relaxed substrate specificity. In vitro can unwind partially double-stranded DNA with a preference for 5'-single-stranded DNA overhangs. Binds RNA G-quadruplex (rG4s) structures, including those located in the 5'-UTR of NRAS mRNA. Involved in many cellular processes, which do not necessarily require its ATPase/helicase catalytic activities. Involved in transcription regulation. Positively regulates CDKN1A/WAF1/CIP1 transcription in an SP1-dependent manner, hence inhibits cell growth. This function requires its ATPase, but not helicase activity. CDKN1A up-regulation may be cell-type specific. Binds CDH1/E-cadherin promoter and represses its transcription. Potentiates HNF4A-mediated MTTP transcriptional activation; this function requires ATPase, but not helicase activity. Facilitates HNF4A acetylation, possibly catalyzed by CREBBP/EP300, thereby increasing the DNA-binding affinity of HNF4 to its response element. In addition, disrupts the interaction between HNF4 and SHP that forms inactive heterodimers and enhances the formation of active HNF4 homodimers. By promoting HNF4A-induced MTTP expression, may play a role in lipid homeostasis. May positively regulate TP53 transcription. Associates with mRNPs, predominantly with spliced mRNAs carrying an exon junction complex (EJC). Involved in the regulation of translation initiation. Not involved in the general process of translation, but promotes efficient translation of selected complex mRNAs, containing highly structured 5'-untranslated regions (UTR). This function depends on helicase activity. Might facilitate translation by resolving secondary structures of 5'-UTRs during ribosome scanning. Alternatively, may act prior to 43S ribosomal scanning and promote 43S pre-initiation complex entry to mRNAs exhibiting specific RNA motifs, by performing local remodeling of transcript structures located close to the cap moiety. Independently of its ATPase activity, promotes the assembly of functional 80S ribosomes and disassembles from ribosomes prior to the translation elongation process. Positively regulates the translation of cyclin E1/CCNE1 mRNA and consequently promotes G1/S-phase transition during the cell cycle. May activate TP53 translation. Required for endoplasmic reticulum stress-induced ATF4 mRNA translation. Independently of its ATPase/helicase activity, enhances IRES-mediated translation; this activity requires interaction with EIF4E. Independently of its ATPase/helicase activity, has also been shown specifically repress cap-dependent translation, possibly by acting on translation initiation factor EIF4E. Involved in innate immunity, acting as a viral RNA sensor. Binds viral RNAs and promotes the production of type I interferon (IFN-alpha and IFN-beta). Potentiate MAVS/RIGI-mediated induction of IFNB in early stages of infection (By similarity). Enhances IFNB1 expression via IRF3/IRF7 pathway and participates in NFKB activation in the presence of MAVS and TBK1 (PubMed:30475900). Involved in TBK1 and IKBKE-dependent IRF3 activation leading to IFNB induction, acts as a scaffolding adapter that links IKBKE and IRF3 and coordinates their activation. Involved in the TLR7/TLR8 signaling pathway leading to type I interferon induction, including IFNA4 production. In this context, acts as an upstream regulator of IRF7 activation by MAP3K14/NIK and CHUK/IKKA. Stimulates CHUK autophosphorylation and activation following physiological activation of the TLR7 and TLR8 pathways, leading to MAP3K14/CHUK-mediated activatory phosphorylation of IRF7. Also stimulates MAP3K14/CHUK-dependent NF-kappa-B signaling. Negatively regulates TNF-induced IL6 and IL8 expression, via the NF-kappa-B pathway. May act by interacting with RELA/p65 and trapping it in the cytoplasm. May also bind IFNB promoter; the function is independent of IRF3 (By similarity). Involved in both stress and inflammatory responses (PubMed:31511697). Independently of its ATPase/helicase activity, required for efficient stress granule assembly through its interaction with EIF4E, hence promotes survival in stressed cells (By similarity). Independently of its helicase activity, regulates NLRP3 inflammasome assembly through interaction with NLRP3 and hence promotes cell death by pyroptosis during inflammation. This function is independent of helicase activity. Therefore DDX3X availability may be used to interpret stress signals and choose between pro-survival stress granules and pyroptotic NLRP3 inflammasomes and serve as a live-or-die checkpoint in stressed cells (PubMed:31511697). In association with GSK3A/B, negatively regulates extrinsic apoptotic signaling pathway via death domain receptors, including TNFRSF10B, slowing down the rate of CASP3 activation following death receptor stimulation. Cleavage by caspases may inactivate DDX3X and relieve the inhibition. Independently of its ATPase/helicase activity, allosteric activator of CSNK1E. Stimulates CSNK1E-mediated phosphorylation of DVL2, thereby involved in the positive regulation of Wnt/beta-catenin signaling pathway. Also activates CSNK1A1 and CSNK1D in vitro, but it is uncertain if these targets are physiologically relevant. ATPase and casein kinase-activating functions are mutually exclusive. May be involved in mitotic chromosome segregation (By similarity).</text>
</comment>
<comment type="catalytic activity">
    <reaction evidence="1">
        <text>ATP + H2O = ADP + phosphate + H(+)</text>
        <dbReference type="Rhea" id="RHEA:13065"/>
        <dbReference type="ChEBI" id="CHEBI:15377"/>
        <dbReference type="ChEBI" id="CHEBI:15378"/>
        <dbReference type="ChEBI" id="CHEBI:30616"/>
        <dbReference type="ChEBI" id="CHEBI:43474"/>
        <dbReference type="ChEBI" id="CHEBI:456216"/>
        <dbReference type="EC" id="3.6.4.13"/>
    </reaction>
</comment>
<comment type="subunit">
    <text evidence="1 11">Homodimer; can bind RNA as a monomer and as a dimer/oligomer. Interacts with TDRD3. When phosphorylated, interacts with IRF3; the interaction facilitates the phosphorylation and activation of IRF3 by IKBKE. Directly interacts with XPO1/CRM1. The interaction with XPO1/CMR1 is dependent on the DDX3X nuclear export signal motif and XPO1 interaction with GTPase RAN in its active GTP-bound form. Weakly interacts with TBKBP1/SINTBAD. Directly interacts with TRAF3; this interaction stimulates TRAF3 'Lys-63' ubiquitination. Interacts with CSNK1E in a Wnt-dependent manner; this interaction greatly enhances CSNK1E affinity for ATP, stimulates its kinase activity and promotes CSNK1E-mediated DVL2 phosphorylation. In the presence of RNA, the interaction is decreased. Also interacts with CSNK1D and stimulates its kinase activity. Interacts with TRPV4; this interaction is decreased when the TRPV4 channel is activated, leading to DDX3X relocalization to the nucleus. Interacts with MAP3K14/NIK. Directly interacts with CHUK/IKKA after physiological activation of the TLR7 and TLR8 pathways; this interaction enhances CHUK autophosphorylation. May associate with EIF4F complex, composed of at least EIF4A, EIF4E and EIF4G1/EIF4G3. Directly interacts with EIF4E in an RNA-independent manner; this interaction enhances EIF4E cap-binding ability. Directly interacts with EIF4G1 in an RNA-independent manner. DDX3X competes with EIF4G1 for interaction with EIF4E. Interacts with EIF4A1 and EIF2S1 in an RNA-independent manner. Associates with the eukaryotic translation initiation factor 3 (eIF-3) complex, including with EIF3B and EIF3C subunits. Directly interacts with IKBKE/IKKE; this interaction stimulates IKBKE activating autophosphorylation and is induced upon viral infection. Interacts with TBK1. Interacts with SP1; this interaction potentiates SP1-induced CDKN1A/WAF1/CIP1 transcription. Interacts with GSK3A and GSK3B. Interacts with several death receptors, inclusing FAS, TNFRSF10A and TNFRSF10B. Recruited to TNFRSF10B in the absence of receptor stimulation. When TNFRSF10B is stimulated, further recruited to the receptor and cleaved by caspases. A large proteolytic fragment remains associated with TNFRSF10B. Interacts (via C-terminus) with NXF1/TAP; this interaction may be partly involved in DDX3X nuclear export and in NXF1 localization to stress granules. Identified in an mRNP complex, composed of at least DHX9, DDX3X, ELAVL1, HNRNPU, IGF2BP1/2, ILF3, PABPC1, PCBP2, PTBP2, STAU1, STAU2, SYNCRIP and YBX1. The interaction with IGF2BP1/2 is RNA-dependent. Directly interacts with PABPC1/PABP1 in an RNA-independent manner. This interaction increases in stressed cells and decreases during cell recovery. Interacts (via C-terminus) with MAVS/IPS-1; this interaction potentiates MAVS-mediated IFNB induction. Interacts with ERCC6/CBS. Interacts with DHX33 in an RNA-independent manner. Interacts with DDX5 in the cytoplasm; this interaction may be more efficient when both proteins are unphosphorylated. Interacts with RIGI. Interacts with IFIH1/MDA5. Interacts with NCAPH; this interaction may be important for the NCAPH localization at condensing chromosomes during mitosis (By similarity). Interacts with NLRP3 (via NACHT domain) under inflammasome-activating conditions (PubMed:31511697). Interacts with CAPRIN1. Interacts with HNF4A and NR0B2/SHP in an RNA-independent manner; this interaction disrupts the interaction between HNF4 and NR0B2 that forms inactive heterodimers and enhances the formation of active HNF4 homodimers. Interacts with CREBBP/CBP. Interacts with EP300/p300. Interacts with gamma-tubulin. Interacts with phosphorylated TP53. Directly interacts with RELA/p65; this interaction may trap RELA in the cytoplasm, impairing nuclear relocalization upon TNF activating signals (By similarity).</text>
</comment>
<comment type="interaction">
    <interactant intactId="EBI-773173">
        <id>Q62167</id>
    </interactant>
    <interactant intactId="EBI-356402">
        <id>Q9UHD2</id>
        <label>TBK1</label>
    </interactant>
    <organismsDiffer>true</organismsDiffer>
    <experiments>8</experiments>
</comment>
<comment type="subcellular location">
    <subcellularLocation>
        <location evidence="1">Cell membrane</location>
    </subcellularLocation>
    <subcellularLocation>
        <location evidence="7">Nucleus</location>
    </subcellularLocation>
    <subcellularLocation>
        <location evidence="7">Cytoplasm</location>
    </subcellularLocation>
    <subcellularLocation>
        <location evidence="11">Cytoplasm</location>
        <location evidence="11">Stress granule</location>
    </subcellularLocation>
    <subcellularLocation>
        <location evidence="11">Inflammasome</location>
    </subcellularLocation>
    <subcellularLocation>
        <location evidence="1">Cell projection</location>
        <location evidence="1">Lamellipodium</location>
    </subcellularLocation>
    <text evidence="1">Shuttles between the nucleus and the cytosol. Exported from the nucleus partly through the XPO1/CRM1 system and partly through NXF1/TAP. Localizes to nuclear pores on the outer side of the nuclear membrane. In the cytosol, partly colocalizes with mitochondria. At G0, predominantly located in nucleus. In G1/S phase, predominantly cytoplasmic. During prophase/prometaphase, localizes in close proximity to the condensing chromosomes. During telophase, localizes around the newly synthesized nuclear membrane and in the cytoplasm. Colocalizes with TRPV4 at the plasma membrane. When TRPV4 channel is activated, intracellular Ca(2+) levels increase and the calmodulin/CAMKII pathway is activated, relocalizes to the nucleus. WNT3A stimulation promotes DDX3 recruitment to the plasma membrane.</text>
</comment>
<comment type="tissue specificity">
    <text evidence="7 12">Expressed in ovary, including in germinal vesicle immature and metaphase II (MII) stage oocytes (at protein level) (PubMed:25050112, PubMed:8948440). In the brain, expressed in the granule cells of the cerebellum and dentate gyrus, the pyramidal cells of the hippocampus, the ependymal cells lining the ventricles, choroid plexi and olfactory bulb. Also accumulates in the thalamic nuclei, the dorsal region of the colliculi and the pontine nucleus (PubMed:8948440).</text>
</comment>
<comment type="developmental stage">
    <text evidence="7 8 12">In oocytes, expression levels increase from germinal vesicle immature oocytes to metaphase II (MII) and decline after fertilization in 1-cell and 2-cell embryos (at protein level) (PubMed:25050112). At 7.5 dpc, highly expressed in all embryonic cells and extraembryonic tissues, including ectoplacental cone, chorion, extraembryonic endoderm and parietal endoderm (at protein level) (PubMed:27179789). At 8.5-9.5 dpc, widely expressed (PubMed:8948440). At 8.5 dpc, levels decrease in extraembryonic tissues (PubMed:27179789). As development proceeds, expression becomes more restricted. At 11.5 dpc, most abundant in the neural tube, but still expressed at moderate levels in a number of other sites, including the mesenchyme of limbs and the face and in liver. At 14.5 dpc, highly expressed in the developing brain and caudal neural tube, but absent from the marginal layer of the neural tube. Also expressed in the developing metanephros and lung. At 15.5 dpc, expressed in the brain and spinal cord, as well as in teeth primordia, the lung and in the developing limb (PubMed:8948440). At 16.5 dpc, moderate, but non-uniform expression levels in the placenta (PubMed:27179789).</text>
</comment>
<comment type="domain">
    <text evidence="1">The C-terminus (residues 536-662) is dispensable for DDX3X trafficking.</text>
</comment>
<comment type="PTM">
    <text evidence="1">Phosphorylated by TBK1; the phosphorylation is required for the synergistic induction of IFNB mediated by TBK1 and DDX3X. Phosphorylated by IKBKE. Also phosphorylated by CSNK1E; this phosphorylation may inhibit RNA-stimulated ATPase activity.</text>
</comment>
<comment type="PTM">
    <text evidence="1">Upon stimulation of death receptors, including TNFRSF10B, recruited to receptors and cleaved by caspases. Proteolytic fragments remain associated with the receptors. This cleavage presumably inactivates DDX3X anti-apoptotic function.</text>
</comment>
<comment type="PTM">
    <text evidence="1">Ubiquitinated by RNF39 via 'Lys-48'-linked ubiquitination; leading to proteasomal degradation.</text>
</comment>
<comment type="disruption phenotype">
    <text evidence="8 9 10">In mutant males, loss of DDX3X leads to early post-implantation lethality. In mutant females with a maternally inherited Ddx3x null allele, paternal X chromosome inactivation affects trophoblast differentiation, which leads to aberrant placental layers and defective vascularization in placental labyrinth. These placental abnormalities impair maternal blood supply to the embryo and ultimately lead to fetal growth restriction and lethality. Heterozygous females with a paternally inherited null allele are born at the expected Mendelian ratio, develop normally and are indistinguishable from their littermate controls (PubMed:27179789). Epiblast-specific knockout embryos exhibit multiple anomalies, including defective neural tube closure, underdeveloped brain, poorly developed myocardial trabeculae, which ultimately lead to embryonic lethality around 11.5 dpc (PubMed:27179789). DDX3X and DDX3Y double knockout is embryonic lethal (PubMed:30613052). DDX3X and DDX3Y double knockout germ cells can differentiate into spermatozoa (PubMed:30613052). Bone-marrow macrophage-specific knockout leads to a reduction in the expression of several cytokines, including IL1B, IL6, IL12 and IFNB1, in response to Listeria monocytogenes infection and pathogen-associated molecular patterns (PAMPs), including poly (I:C), poly (dA:dT) and LPS. This effect is more prononced in females than in male macrophages, probably due to the functional redundancy with DDX3Y gene located on chromosome Y (PubMed:30475900).</text>
</comment>
<comment type="miscellaneous">
    <text evidence="1 8">Encoded by an chromosome X-linked gene which escapes X chromosome inactivation (XCI) in females, but exhibits developmental- and tissue-specific differences in escape from XCI. DDX3Y, its homolog on chromosome Y, is located in the Y non-recombinant portion (By similarity). In 8 to 16 cell stage embryos, expression from paternal and maternal copies of DDX3X is detected. Paternally derived DDX3X is preferentially inactivated in extraembryonic tissues of embryos from 6.5 dpc (PubMed:27179789).</text>
</comment>
<comment type="similarity">
    <text evidence="15">Belongs to the DEAD box helicase family. DDX3/DED1 subfamily.</text>
</comment>
<comment type="caution">
    <text evidence="1">The role of the nuclear export signal (NES) motif in XPO1-mediated DDX3X export is controversial (By similarity). In one study, NES has been found dispensable for DDX3X export while the helicase domain mediates the interaction with XPO1 (By similarity). However, in two other studies, DDX3X nuclear export is dependent on both NES and Ran in its GTP-bound form while the helicase domain is not required (By similarity).</text>
</comment>